<protein>
    <recommendedName>
        <fullName evidence="1">Queuine tRNA-ribosyltransferase</fullName>
        <ecNumber evidence="1">2.4.2.29</ecNumber>
    </recommendedName>
    <alternativeName>
        <fullName evidence="1">Guanine insertion enzyme</fullName>
    </alternativeName>
    <alternativeName>
        <fullName evidence="1">tRNA-guanine transglycosylase</fullName>
    </alternativeName>
</protein>
<evidence type="ECO:0000255" key="1">
    <source>
        <dbReference type="HAMAP-Rule" id="MF_00168"/>
    </source>
</evidence>
<accession>Q5KWR4</accession>
<dbReference type="EC" id="2.4.2.29" evidence="1"/>
<dbReference type="EMBL" id="BA000043">
    <property type="protein sequence ID" value="BAD76872.1"/>
    <property type="molecule type" value="Genomic_DNA"/>
</dbReference>
<dbReference type="RefSeq" id="WP_011232064.1">
    <property type="nucleotide sequence ID" value="NC_006510.1"/>
</dbReference>
<dbReference type="SMR" id="Q5KWR4"/>
<dbReference type="STRING" id="235909.GK2587"/>
<dbReference type="KEGG" id="gka:GK2587"/>
<dbReference type="eggNOG" id="COG0343">
    <property type="taxonomic scope" value="Bacteria"/>
</dbReference>
<dbReference type="HOGENOM" id="CLU_022060_0_1_9"/>
<dbReference type="UniPathway" id="UPA00392"/>
<dbReference type="Proteomes" id="UP000001172">
    <property type="component" value="Chromosome"/>
</dbReference>
<dbReference type="GO" id="GO:0005829">
    <property type="term" value="C:cytosol"/>
    <property type="evidence" value="ECO:0007669"/>
    <property type="project" value="TreeGrafter"/>
</dbReference>
<dbReference type="GO" id="GO:0046872">
    <property type="term" value="F:metal ion binding"/>
    <property type="evidence" value="ECO:0007669"/>
    <property type="project" value="UniProtKB-KW"/>
</dbReference>
<dbReference type="GO" id="GO:0008479">
    <property type="term" value="F:tRNA-guanosine(34) queuine transglycosylase activity"/>
    <property type="evidence" value="ECO:0007669"/>
    <property type="project" value="UniProtKB-UniRule"/>
</dbReference>
<dbReference type="GO" id="GO:0008616">
    <property type="term" value="P:queuosine biosynthetic process"/>
    <property type="evidence" value="ECO:0007669"/>
    <property type="project" value="UniProtKB-UniRule"/>
</dbReference>
<dbReference type="GO" id="GO:0002099">
    <property type="term" value="P:tRNA wobble guanine modification"/>
    <property type="evidence" value="ECO:0007669"/>
    <property type="project" value="TreeGrafter"/>
</dbReference>
<dbReference type="GO" id="GO:0101030">
    <property type="term" value="P:tRNA-guanine transglycosylation"/>
    <property type="evidence" value="ECO:0007669"/>
    <property type="project" value="InterPro"/>
</dbReference>
<dbReference type="FunFam" id="3.20.20.105:FF:000001">
    <property type="entry name" value="Queuine tRNA-ribosyltransferase"/>
    <property type="match status" value="1"/>
</dbReference>
<dbReference type="Gene3D" id="3.20.20.105">
    <property type="entry name" value="Queuine tRNA-ribosyltransferase-like"/>
    <property type="match status" value="1"/>
</dbReference>
<dbReference type="HAMAP" id="MF_00168">
    <property type="entry name" value="Q_tRNA_Tgt"/>
    <property type="match status" value="1"/>
</dbReference>
<dbReference type="InterPro" id="IPR050076">
    <property type="entry name" value="ArchSynthase1/Queuine_TRR"/>
</dbReference>
<dbReference type="InterPro" id="IPR004803">
    <property type="entry name" value="TGT"/>
</dbReference>
<dbReference type="InterPro" id="IPR036511">
    <property type="entry name" value="TGT-like_sf"/>
</dbReference>
<dbReference type="InterPro" id="IPR002616">
    <property type="entry name" value="tRNA_ribo_trans-like"/>
</dbReference>
<dbReference type="NCBIfam" id="TIGR00430">
    <property type="entry name" value="Q_tRNA_tgt"/>
    <property type="match status" value="1"/>
</dbReference>
<dbReference type="NCBIfam" id="TIGR00449">
    <property type="entry name" value="tgt_general"/>
    <property type="match status" value="1"/>
</dbReference>
<dbReference type="PANTHER" id="PTHR46499">
    <property type="entry name" value="QUEUINE TRNA-RIBOSYLTRANSFERASE"/>
    <property type="match status" value="1"/>
</dbReference>
<dbReference type="PANTHER" id="PTHR46499:SF1">
    <property type="entry name" value="QUEUINE TRNA-RIBOSYLTRANSFERASE"/>
    <property type="match status" value="1"/>
</dbReference>
<dbReference type="Pfam" id="PF01702">
    <property type="entry name" value="TGT"/>
    <property type="match status" value="1"/>
</dbReference>
<dbReference type="SUPFAM" id="SSF51713">
    <property type="entry name" value="tRNA-guanine transglycosylase"/>
    <property type="match status" value="1"/>
</dbReference>
<feature type="chain" id="PRO_0000135478" description="Queuine tRNA-ribosyltransferase">
    <location>
        <begin position="1"/>
        <end position="380"/>
    </location>
</feature>
<feature type="region of interest" description="RNA binding" evidence="1">
    <location>
        <begin position="250"/>
        <end position="256"/>
    </location>
</feature>
<feature type="region of interest" description="RNA binding; important for wobble base 34 recognition" evidence="1">
    <location>
        <begin position="274"/>
        <end position="278"/>
    </location>
</feature>
<feature type="active site" description="Proton acceptor" evidence="1">
    <location>
        <position position="95"/>
    </location>
</feature>
<feature type="active site" description="Nucleophile" evidence="1">
    <location>
        <position position="269"/>
    </location>
</feature>
<feature type="binding site" evidence="1">
    <location>
        <begin position="95"/>
        <end position="99"/>
    </location>
    <ligand>
        <name>substrate</name>
    </ligand>
</feature>
<feature type="binding site" evidence="1">
    <location>
        <position position="149"/>
    </location>
    <ligand>
        <name>substrate</name>
    </ligand>
</feature>
<feature type="binding site" evidence="1">
    <location>
        <position position="192"/>
    </location>
    <ligand>
        <name>substrate</name>
    </ligand>
</feature>
<feature type="binding site" evidence="1">
    <location>
        <position position="219"/>
    </location>
    <ligand>
        <name>substrate</name>
    </ligand>
</feature>
<feature type="binding site" evidence="1">
    <location>
        <position position="307"/>
    </location>
    <ligand>
        <name>Zn(2+)</name>
        <dbReference type="ChEBI" id="CHEBI:29105"/>
    </ligand>
</feature>
<feature type="binding site" evidence="1">
    <location>
        <position position="309"/>
    </location>
    <ligand>
        <name>Zn(2+)</name>
        <dbReference type="ChEBI" id="CHEBI:29105"/>
    </ligand>
</feature>
<feature type="binding site" evidence="1">
    <location>
        <position position="312"/>
    </location>
    <ligand>
        <name>Zn(2+)</name>
        <dbReference type="ChEBI" id="CHEBI:29105"/>
    </ligand>
</feature>
<feature type="binding site" evidence="1">
    <location>
        <position position="338"/>
    </location>
    <ligand>
        <name>Zn(2+)</name>
        <dbReference type="ChEBI" id="CHEBI:29105"/>
    </ligand>
</feature>
<name>TGT_GEOKA</name>
<gene>
    <name evidence="1" type="primary">tgt</name>
    <name type="ordered locus">GK2587</name>
</gene>
<sequence length="380" mass="43270">MTTPIRFELIKTCRQTGARLGILHTPHGSFETPMFMPVGTLATVKTLSPEELKEMGAGVILSNTYHLWLRPGHDIVEEAGGLHAFMNWDRGILTDSGGFQVFSLSEFRRIEEEGVYFRNHLNGDKLFLSPEKAVEIQNALGADIIMAFDECPPYPATYEYMKQSIERTSRWAERCLKAHRRPNEQGLFGIVQGGEYEELRRQSARDLVSLDFPGYAVGGLSVGEPKEVMNRVLEFTTPLLPADKPRYLMGVGSPDSLIDGAIRGIDMFDCVLPTRIGRNGTVMTSEGRVVIKNAQYARDFSPLDPNCDCYTCRNYTRAYIRHLIKCDETFGIRLTSYHNVYFLIKLMEQVRQAIREDRLADFREEFFECYGFNKPNAKNF</sequence>
<organism>
    <name type="scientific">Geobacillus kaustophilus (strain HTA426)</name>
    <dbReference type="NCBI Taxonomy" id="235909"/>
    <lineage>
        <taxon>Bacteria</taxon>
        <taxon>Bacillati</taxon>
        <taxon>Bacillota</taxon>
        <taxon>Bacilli</taxon>
        <taxon>Bacillales</taxon>
        <taxon>Anoxybacillaceae</taxon>
        <taxon>Geobacillus</taxon>
        <taxon>Geobacillus thermoleovorans group</taxon>
    </lineage>
</organism>
<comment type="function">
    <text evidence="1">Catalyzes the base-exchange of a guanine (G) residue with the queuine precursor 7-aminomethyl-7-deazaguanine (PreQ1) at position 34 (anticodon wobble position) in tRNAs with GU(N) anticodons (tRNA-Asp, -Asn, -His and -Tyr). Catalysis occurs through a double-displacement mechanism. The nucleophile active site attacks the C1' of nucleotide 34 to detach the guanine base from the RNA, forming a covalent enzyme-RNA intermediate. The proton acceptor active site deprotonates the incoming PreQ1, allowing a nucleophilic attack on the C1' of the ribose to form the product. After dissociation, two additional enzymatic reactions on the tRNA convert PreQ1 to queuine (Q), resulting in the hypermodified nucleoside queuosine (7-(((4,5-cis-dihydroxy-2-cyclopenten-1-yl)amino)methyl)-7-deazaguanosine).</text>
</comment>
<comment type="catalytic activity">
    <reaction evidence="1">
        <text>7-aminomethyl-7-carbaguanine + guanosine(34) in tRNA = 7-aminomethyl-7-carbaguanosine(34) in tRNA + guanine</text>
        <dbReference type="Rhea" id="RHEA:24104"/>
        <dbReference type="Rhea" id="RHEA-COMP:10341"/>
        <dbReference type="Rhea" id="RHEA-COMP:10342"/>
        <dbReference type="ChEBI" id="CHEBI:16235"/>
        <dbReference type="ChEBI" id="CHEBI:58703"/>
        <dbReference type="ChEBI" id="CHEBI:74269"/>
        <dbReference type="ChEBI" id="CHEBI:82833"/>
        <dbReference type="EC" id="2.4.2.29"/>
    </reaction>
</comment>
<comment type="cofactor">
    <cofactor evidence="1">
        <name>Zn(2+)</name>
        <dbReference type="ChEBI" id="CHEBI:29105"/>
    </cofactor>
    <text evidence="1">Binds 1 zinc ion per subunit.</text>
</comment>
<comment type="pathway">
    <text evidence="1">tRNA modification; tRNA-queuosine biosynthesis.</text>
</comment>
<comment type="subunit">
    <text evidence="1">Homodimer. Within each dimer, one monomer is responsible for RNA recognition and catalysis, while the other monomer binds to the replacement base PreQ1.</text>
</comment>
<comment type="similarity">
    <text evidence="1">Belongs to the queuine tRNA-ribosyltransferase family.</text>
</comment>
<keyword id="KW-0328">Glycosyltransferase</keyword>
<keyword id="KW-0479">Metal-binding</keyword>
<keyword id="KW-0671">Queuosine biosynthesis</keyword>
<keyword id="KW-1185">Reference proteome</keyword>
<keyword id="KW-0808">Transferase</keyword>
<keyword id="KW-0819">tRNA processing</keyword>
<keyword id="KW-0862">Zinc</keyword>
<reference key="1">
    <citation type="journal article" date="2004" name="Nucleic Acids Res.">
        <title>Thermoadaptation trait revealed by the genome sequence of thermophilic Geobacillus kaustophilus.</title>
        <authorList>
            <person name="Takami H."/>
            <person name="Takaki Y."/>
            <person name="Chee G.-J."/>
            <person name="Nishi S."/>
            <person name="Shimamura S."/>
            <person name="Suzuki H."/>
            <person name="Matsui S."/>
            <person name="Uchiyama I."/>
        </authorList>
    </citation>
    <scope>NUCLEOTIDE SEQUENCE [LARGE SCALE GENOMIC DNA]</scope>
    <source>
        <strain>HTA426</strain>
    </source>
</reference>
<proteinExistence type="inferred from homology"/>